<reference key="1">
    <citation type="journal article" date="1998" name="DNA Res.">
        <title>Complete sequence and gene organization of the genome of a hyper-thermophilic archaebacterium, Pyrococcus horikoshii OT3.</title>
        <authorList>
            <person name="Kawarabayasi Y."/>
            <person name="Sawada M."/>
            <person name="Horikawa H."/>
            <person name="Haikawa Y."/>
            <person name="Hino Y."/>
            <person name="Yamamoto S."/>
            <person name="Sekine M."/>
            <person name="Baba S."/>
            <person name="Kosugi H."/>
            <person name="Hosoyama A."/>
            <person name="Nagai Y."/>
            <person name="Sakai M."/>
            <person name="Ogura K."/>
            <person name="Otsuka R."/>
            <person name="Nakazawa H."/>
            <person name="Takamiya M."/>
            <person name="Ohfuku Y."/>
            <person name="Funahashi T."/>
            <person name="Tanaka T."/>
            <person name="Kudoh Y."/>
            <person name="Yamazaki J."/>
            <person name="Kushida N."/>
            <person name="Oguchi A."/>
            <person name="Aoki K."/>
            <person name="Yoshizawa T."/>
            <person name="Nakamura Y."/>
            <person name="Robb F.T."/>
            <person name="Horikoshi K."/>
            <person name="Masuchi Y."/>
            <person name="Shizuya H."/>
            <person name="Kikuchi H."/>
        </authorList>
    </citation>
    <scope>NUCLEOTIDE SEQUENCE [LARGE SCALE GENOMIC DNA]</scope>
    <source>
        <strain>ATCC 700860 / DSM 12428 / JCM 9974 / NBRC 100139 / OT-3</strain>
    </source>
</reference>
<name>SDO1_PYRHO</name>
<organism>
    <name type="scientific">Pyrococcus horikoshii (strain ATCC 700860 / DSM 12428 / JCM 9974 / NBRC 100139 / OT-3)</name>
    <dbReference type="NCBI Taxonomy" id="70601"/>
    <lineage>
        <taxon>Archaea</taxon>
        <taxon>Methanobacteriati</taxon>
        <taxon>Methanobacteriota</taxon>
        <taxon>Thermococci</taxon>
        <taxon>Thermococcales</taxon>
        <taxon>Thermococcaceae</taxon>
        <taxon>Pyrococcus</taxon>
    </lineage>
</organism>
<protein>
    <recommendedName>
        <fullName>Ribosome maturation protein SDO1 homolog</fullName>
    </recommendedName>
</protein>
<evidence type="ECO:0000305" key="1"/>
<dbReference type="EMBL" id="BA000001">
    <property type="protein sequence ID" value="BAA30664.1"/>
    <property type="molecule type" value="Genomic_DNA"/>
</dbReference>
<dbReference type="PIR" id="H71032">
    <property type="entry name" value="H71032"/>
</dbReference>
<dbReference type="RefSeq" id="WP_010885631.1">
    <property type="nucleotide sequence ID" value="NC_000961.1"/>
</dbReference>
<dbReference type="SMR" id="O59220"/>
<dbReference type="STRING" id="70601.gene:9378542"/>
<dbReference type="EnsemblBacteria" id="BAA30664">
    <property type="protein sequence ID" value="BAA30664"/>
    <property type="gene ID" value="BAA30664"/>
</dbReference>
<dbReference type="GeneID" id="1443871"/>
<dbReference type="KEGG" id="pho:PH1552"/>
<dbReference type="eggNOG" id="arCOG04187">
    <property type="taxonomic scope" value="Archaea"/>
</dbReference>
<dbReference type="OrthoDB" id="84504at2157"/>
<dbReference type="Proteomes" id="UP000000752">
    <property type="component" value="Chromosome"/>
</dbReference>
<dbReference type="GO" id="GO:0042256">
    <property type="term" value="P:cytosolic ribosome assembly"/>
    <property type="evidence" value="ECO:0007669"/>
    <property type="project" value="InterPro"/>
</dbReference>
<dbReference type="Gene3D" id="3.30.70.240">
    <property type="match status" value="1"/>
</dbReference>
<dbReference type="Gene3D" id="3.30.1250.10">
    <property type="entry name" value="Ribosome maturation protein SBDS, N-terminal domain"/>
    <property type="match status" value="1"/>
</dbReference>
<dbReference type="Gene3D" id="1.10.10.900">
    <property type="entry name" value="SBDS protein C-terminal domain, subdomain 1"/>
    <property type="match status" value="1"/>
</dbReference>
<dbReference type="InterPro" id="IPR035647">
    <property type="entry name" value="EFG_III/V"/>
</dbReference>
<dbReference type="InterPro" id="IPR018023">
    <property type="entry name" value="Ribosome_mat_SBDS_CS"/>
</dbReference>
<dbReference type="InterPro" id="IPR036786">
    <property type="entry name" value="Ribosome_mat_SBDS_N_sf"/>
</dbReference>
<dbReference type="InterPro" id="IPR002140">
    <property type="entry name" value="Sdo1/SBDS"/>
</dbReference>
<dbReference type="InterPro" id="IPR039100">
    <property type="entry name" value="Sdo1/SBDS-like"/>
</dbReference>
<dbReference type="InterPro" id="IPR046928">
    <property type="entry name" value="SDO1/SBDS_C"/>
</dbReference>
<dbReference type="InterPro" id="IPR018978">
    <property type="entry name" value="SDO1/SBDS_central"/>
</dbReference>
<dbReference type="InterPro" id="IPR037188">
    <property type="entry name" value="Sdo1/SBDS_central_sf"/>
</dbReference>
<dbReference type="InterPro" id="IPR019783">
    <property type="entry name" value="SDO1/SBDS_N"/>
</dbReference>
<dbReference type="NCBIfam" id="TIGR00291">
    <property type="entry name" value="RNA_SBDS"/>
    <property type="match status" value="1"/>
</dbReference>
<dbReference type="PANTHER" id="PTHR10927">
    <property type="entry name" value="RIBOSOME MATURATION PROTEIN SBDS"/>
    <property type="match status" value="1"/>
</dbReference>
<dbReference type="PANTHER" id="PTHR10927:SF4">
    <property type="entry name" value="RIBOSOME MATURATION PROTEIN SDO1 HOMOLOG"/>
    <property type="match status" value="1"/>
</dbReference>
<dbReference type="Pfam" id="PF20268">
    <property type="entry name" value="SBDS_C"/>
    <property type="match status" value="1"/>
</dbReference>
<dbReference type="Pfam" id="PF09377">
    <property type="entry name" value="SBDS_domain_II"/>
    <property type="match status" value="1"/>
</dbReference>
<dbReference type="Pfam" id="PF01172">
    <property type="entry name" value="SBDS_N"/>
    <property type="match status" value="1"/>
</dbReference>
<dbReference type="SUPFAM" id="SSF54980">
    <property type="entry name" value="EF-G C-terminal domain-like"/>
    <property type="match status" value="1"/>
</dbReference>
<dbReference type="SUPFAM" id="SSF89895">
    <property type="entry name" value="FYSH domain"/>
    <property type="match status" value="1"/>
</dbReference>
<dbReference type="SUPFAM" id="SSF109728">
    <property type="entry name" value="Hypothetical protein AF0491, middle domain"/>
    <property type="match status" value="1"/>
</dbReference>
<dbReference type="PROSITE" id="PS01267">
    <property type="entry name" value="UPF0023"/>
    <property type="match status" value="1"/>
</dbReference>
<proteinExistence type="inferred from homology"/>
<gene>
    <name type="ordered locus">PH1552</name>
</gene>
<sequence>MPISVDKAVIARLKIQGETFEILVDPYLARDFKEGKNVPIEEILATPYVFKDAHKGDKASEKEMEKIFGTSDPYEVAKIILKKGEVQLTAQQRREMLEEKKRQIATIIHKHAVDPRTGYPHPVDRILRAMEEVGVRVDIFKDAEAQVQDVIKALRRVLPLRIEMKVIAVKIPGEYVGRSYGEVRKFGRIKKEEWGSDGSWMFLIEIPGGVEEEFYEKLNALTKGNAQTKLIERKGL</sequence>
<feature type="chain" id="PRO_0000123772" description="Ribosome maturation protein SDO1 homolog">
    <location>
        <begin position="1"/>
        <end position="236"/>
    </location>
</feature>
<accession>O59220</accession>
<comment type="similarity">
    <text evidence="1">Belongs to the SDO1/SBDS family.</text>
</comment>